<keyword id="KW-0002">3D-structure</keyword>
<keyword id="KW-1185">Reference proteome</keyword>
<keyword id="KW-0687">Ribonucleoprotein</keyword>
<keyword id="KW-0689">Ribosomal protein</keyword>
<name>RL29_LISMO</name>
<gene>
    <name evidence="1" type="primary">rpmC</name>
    <name type="ordered locus">lmo2624</name>
</gene>
<accession>P66166</accession>
<accession>Q927L5</accession>
<sequence>MKANDIRDLSTTEIQDQEKALKEELFNLRFQLATGQLENTARIREVRKAIARMKTIVRERELA</sequence>
<protein>
    <recommendedName>
        <fullName evidence="1">Large ribosomal subunit protein uL29</fullName>
    </recommendedName>
    <alternativeName>
        <fullName evidence="2">50S ribosomal protein L29</fullName>
    </alternativeName>
</protein>
<feature type="chain" id="PRO_0000130414" description="Large ribosomal subunit protein uL29">
    <location>
        <begin position="1"/>
        <end position="63"/>
    </location>
</feature>
<feature type="helix" evidence="3">
    <location>
        <begin position="4"/>
        <end position="8"/>
    </location>
</feature>
<feature type="helix" evidence="3">
    <location>
        <begin position="11"/>
        <end position="33"/>
    </location>
</feature>
<feature type="helix" evidence="3">
    <location>
        <begin position="42"/>
        <end position="60"/>
    </location>
</feature>
<reference key="1">
    <citation type="journal article" date="2001" name="Science">
        <title>Comparative genomics of Listeria species.</title>
        <authorList>
            <person name="Glaser P."/>
            <person name="Frangeul L."/>
            <person name="Buchrieser C."/>
            <person name="Rusniok C."/>
            <person name="Amend A."/>
            <person name="Baquero F."/>
            <person name="Berche P."/>
            <person name="Bloecker H."/>
            <person name="Brandt P."/>
            <person name="Chakraborty T."/>
            <person name="Charbit A."/>
            <person name="Chetouani F."/>
            <person name="Couve E."/>
            <person name="de Daruvar A."/>
            <person name="Dehoux P."/>
            <person name="Domann E."/>
            <person name="Dominguez-Bernal G."/>
            <person name="Duchaud E."/>
            <person name="Durant L."/>
            <person name="Dussurget O."/>
            <person name="Entian K.-D."/>
            <person name="Fsihi H."/>
            <person name="Garcia-del Portillo F."/>
            <person name="Garrido P."/>
            <person name="Gautier L."/>
            <person name="Goebel W."/>
            <person name="Gomez-Lopez N."/>
            <person name="Hain T."/>
            <person name="Hauf J."/>
            <person name="Jackson D."/>
            <person name="Jones L.-M."/>
            <person name="Kaerst U."/>
            <person name="Kreft J."/>
            <person name="Kuhn M."/>
            <person name="Kunst F."/>
            <person name="Kurapkat G."/>
            <person name="Madueno E."/>
            <person name="Maitournam A."/>
            <person name="Mata Vicente J."/>
            <person name="Ng E."/>
            <person name="Nedjari H."/>
            <person name="Nordsiek G."/>
            <person name="Novella S."/>
            <person name="de Pablos B."/>
            <person name="Perez-Diaz J.-C."/>
            <person name="Purcell R."/>
            <person name="Remmel B."/>
            <person name="Rose M."/>
            <person name="Schlueter T."/>
            <person name="Simoes N."/>
            <person name="Tierrez A."/>
            <person name="Vazquez-Boland J.-A."/>
            <person name="Voss H."/>
            <person name="Wehland J."/>
            <person name="Cossart P."/>
        </authorList>
    </citation>
    <scope>NUCLEOTIDE SEQUENCE [LARGE SCALE GENOMIC DNA]</scope>
    <source>
        <strain>ATCC BAA-679 / EGD-e</strain>
    </source>
</reference>
<organism>
    <name type="scientific">Listeria monocytogenes serovar 1/2a (strain ATCC BAA-679 / EGD-e)</name>
    <dbReference type="NCBI Taxonomy" id="169963"/>
    <lineage>
        <taxon>Bacteria</taxon>
        <taxon>Bacillati</taxon>
        <taxon>Bacillota</taxon>
        <taxon>Bacilli</taxon>
        <taxon>Bacillales</taxon>
        <taxon>Listeriaceae</taxon>
        <taxon>Listeria</taxon>
    </lineage>
</organism>
<dbReference type="EMBL" id="AL591983">
    <property type="protein sequence ID" value="CAD00702.1"/>
    <property type="molecule type" value="Genomic_DNA"/>
</dbReference>
<dbReference type="PIR" id="AH1402">
    <property type="entry name" value="AH1402"/>
</dbReference>
<dbReference type="RefSeq" id="NP_466147.1">
    <property type="nucleotide sequence ID" value="NC_003210.1"/>
</dbReference>
<dbReference type="RefSeq" id="WP_003720942.1">
    <property type="nucleotide sequence ID" value="NZ_CP149495.1"/>
</dbReference>
<dbReference type="PDB" id="7NHN">
    <property type="method" value="EM"/>
    <property type="resolution" value="2.90 A"/>
    <property type="chains" value="2=1-63"/>
</dbReference>
<dbReference type="PDB" id="8A57">
    <property type="method" value="EM"/>
    <property type="resolution" value="2.30 A"/>
    <property type="chains" value="2=1-63"/>
</dbReference>
<dbReference type="PDB" id="8A5I">
    <property type="method" value="EM"/>
    <property type="resolution" value="2.30 A"/>
    <property type="chains" value="2=1-63"/>
</dbReference>
<dbReference type="PDB" id="8A63">
    <property type="method" value="EM"/>
    <property type="resolution" value="3.10 A"/>
    <property type="chains" value="2=1-63"/>
</dbReference>
<dbReference type="PDBsum" id="7NHN"/>
<dbReference type="PDBsum" id="8A57"/>
<dbReference type="PDBsum" id="8A5I"/>
<dbReference type="PDBsum" id="8A63"/>
<dbReference type="EMDB" id="EMD-12334"/>
<dbReference type="EMDB" id="EMD-15161"/>
<dbReference type="EMDB" id="EMD-15175"/>
<dbReference type="EMDB" id="EMD-15204"/>
<dbReference type="SMR" id="P66166"/>
<dbReference type="STRING" id="169963.gene:17595342"/>
<dbReference type="PaxDb" id="169963-lmo2624"/>
<dbReference type="EnsemblBacteria" id="CAD00702">
    <property type="protein sequence ID" value="CAD00702"/>
    <property type="gene ID" value="CAD00702"/>
</dbReference>
<dbReference type="GeneID" id="93240505"/>
<dbReference type="GeneID" id="987188"/>
<dbReference type="KEGG" id="lmo:lmo2624"/>
<dbReference type="PATRIC" id="fig|169963.11.peg.2688"/>
<dbReference type="eggNOG" id="COG0255">
    <property type="taxonomic scope" value="Bacteria"/>
</dbReference>
<dbReference type="HOGENOM" id="CLU_158491_5_2_9"/>
<dbReference type="OrthoDB" id="9815192at2"/>
<dbReference type="PhylomeDB" id="P66166"/>
<dbReference type="BioCyc" id="LMON169963:LMO2624-MONOMER"/>
<dbReference type="Proteomes" id="UP000000817">
    <property type="component" value="Chromosome"/>
</dbReference>
<dbReference type="GO" id="GO:0022625">
    <property type="term" value="C:cytosolic large ribosomal subunit"/>
    <property type="evidence" value="ECO:0000318"/>
    <property type="project" value="GO_Central"/>
</dbReference>
<dbReference type="GO" id="GO:0003735">
    <property type="term" value="F:structural constituent of ribosome"/>
    <property type="evidence" value="ECO:0007669"/>
    <property type="project" value="InterPro"/>
</dbReference>
<dbReference type="GO" id="GO:0006412">
    <property type="term" value="P:translation"/>
    <property type="evidence" value="ECO:0007669"/>
    <property type="project" value="UniProtKB-UniRule"/>
</dbReference>
<dbReference type="CDD" id="cd00427">
    <property type="entry name" value="Ribosomal_L29_HIP"/>
    <property type="match status" value="1"/>
</dbReference>
<dbReference type="FunFam" id="1.10.287.310:FF:000001">
    <property type="entry name" value="50S ribosomal protein L29"/>
    <property type="match status" value="1"/>
</dbReference>
<dbReference type="Gene3D" id="1.10.287.310">
    <property type="match status" value="1"/>
</dbReference>
<dbReference type="HAMAP" id="MF_00374">
    <property type="entry name" value="Ribosomal_uL29"/>
    <property type="match status" value="1"/>
</dbReference>
<dbReference type="InterPro" id="IPR050063">
    <property type="entry name" value="Ribosomal_protein_uL29"/>
</dbReference>
<dbReference type="InterPro" id="IPR001854">
    <property type="entry name" value="Ribosomal_uL29"/>
</dbReference>
<dbReference type="InterPro" id="IPR018254">
    <property type="entry name" value="Ribosomal_uL29_CS"/>
</dbReference>
<dbReference type="InterPro" id="IPR036049">
    <property type="entry name" value="Ribosomal_uL29_sf"/>
</dbReference>
<dbReference type="NCBIfam" id="TIGR00012">
    <property type="entry name" value="L29"/>
    <property type="match status" value="1"/>
</dbReference>
<dbReference type="PANTHER" id="PTHR10916">
    <property type="entry name" value="60S RIBOSOMAL PROTEIN L35/50S RIBOSOMAL PROTEIN L29"/>
    <property type="match status" value="1"/>
</dbReference>
<dbReference type="PANTHER" id="PTHR10916:SF0">
    <property type="entry name" value="LARGE RIBOSOMAL SUBUNIT PROTEIN UL29C"/>
    <property type="match status" value="1"/>
</dbReference>
<dbReference type="Pfam" id="PF00831">
    <property type="entry name" value="Ribosomal_L29"/>
    <property type="match status" value="1"/>
</dbReference>
<dbReference type="SUPFAM" id="SSF46561">
    <property type="entry name" value="Ribosomal protein L29 (L29p)"/>
    <property type="match status" value="1"/>
</dbReference>
<dbReference type="PROSITE" id="PS00579">
    <property type="entry name" value="RIBOSOMAL_L29"/>
    <property type="match status" value="1"/>
</dbReference>
<comment type="similarity">
    <text evidence="1">Belongs to the universal ribosomal protein uL29 family.</text>
</comment>
<proteinExistence type="evidence at protein level"/>
<evidence type="ECO:0000255" key="1">
    <source>
        <dbReference type="HAMAP-Rule" id="MF_00374"/>
    </source>
</evidence>
<evidence type="ECO:0000305" key="2"/>
<evidence type="ECO:0007829" key="3">
    <source>
        <dbReference type="PDB" id="8A57"/>
    </source>
</evidence>